<protein>
    <recommendedName>
        <fullName evidence="1">Glycine cleavage system H protein</fullName>
    </recommendedName>
    <alternativeName>
        <fullName evidence="1">Octanoyl/lipoyl carrier protein</fullName>
    </alternativeName>
</protein>
<accession>A8FH75</accession>
<organism>
    <name type="scientific">Bacillus pumilus (strain SAFR-032)</name>
    <dbReference type="NCBI Taxonomy" id="315750"/>
    <lineage>
        <taxon>Bacteria</taxon>
        <taxon>Bacillati</taxon>
        <taxon>Bacillota</taxon>
        <taxon>Bacilli</taxon>
        <taxon>Bacillales</taxon>
        <taxon>Bacillaceae</taxon>
        <taxon>Bacillus</taxon>
    </lineage>
</organism>
<sequence length="127" mass="14358">MSTPKDLRYSEEHEWVKVEGEKVRIGITHFAQSELGDIVFVELPEVGDKITADEPFGSVESVKTVSELYAPINGTIVEVNDELDDSPEFVNDSPYEKAWMIVVEPADTSEIENLMTAEQYEEMTKED</sequence>
<reference key="1">
    <citation type="journal article" date="2007" name="PLoS ONE">
        <title>Paradoxical DNA repair and peroxide resistance gene conservation in Bacillus pumilus SAFR-032.</title>
        <authorList>
            <person name="Gioia J."/>
            <person name="Yerrapragada S."/>
            <person name="Qin X."/>
            <person name="Jiang H."/>
            <person name="Igboeli O.C."/>
            <person name="Muzny D."/>
            <person name="Dugan-Rocha S."/>
            <person name="Ding Y."/>
            <person name="Hawes A."/>
            <person name="Liu W."/>
            <person name="Perez L."/>
            <person name="Kovar C."/>
            <person name="Dinh H."/>
            <person name="Lee S."/>
            <person name="Nazareth L."/>
            <person name="Blyth P."/>
            <person name="Holder M."/>
            <person name="Buhay C."/>
            <person name="Tirumalai M.R."/>
            <person name="Liu Y."/>
            <person name="Dasgupta I."/>
            <person name="Bokhetache L."/>
            <person name="Fujita M."/>
            <person name="Karouia F."/>
            <person name="Eswara Moorthy P."/>
            <person name="Siefert J."/>
            <person name="Uzman A."/>
            <person name="Buzumbo P."/>
            <person name="Verma A."/>
            <person name="Zwiya H."/>
            <person name="McWilliams B.D."/>
            <person name="Olowu A."/>
            <person name="Clinkenbeard K.D."/>
            <person name="Newcombe D."/>
            <person name="Golebiewski L."/>
            <person name="Petrosino J.F."/>
            <person name="Nicholson W.L."/>
            <person name="Fox G.E."/>
            <person name="Venkateswaran K."/>
            <person name="Highlander S.K."/>
            <person name="Weinstock G.M."/>
        </authorList>
    </citation>
    <scope>NUCLEOTIDE SEQUENCE [LARGE SCALE GENOMIC DNA]</scope>
    <source>
        <strain>SAFR-032</strain>
    </source>
</reference>
<dbReference type="EMBL" id="CP000813">
    <property type="protein sequence ID" value="ABV63592.1"/>
    <property type="molecule type" value="Genomic_DNA"/>
</dbReference>
<dbReference type="RefSeq" id="WP_012011193.1">
    <property type="nucleotide sequence ID" value="NZ_VEIS01000008.1"/>
</dbReference>
<dbReference type="SMR" id="A8FH75"/>
<dbReference type="STRING" id="315750.BPUM_2938"/>
<dbReference type="GeneID" id="5622226"/>
<dbReference type="KEGG" id="bpu:BPUM_2938"/>
<dbReference type="eggNOG" id="COG0509">
    <property type="taxonomic scope" value="Bacteria"/>
</dbReference>
<dbReference type="HOGENOM" id="CLU_097408_2_2_9"/>
<dbReference type="OrthoDB" id="9796712at2"/>
<dbReference type="Proteomes" id="UP000001355">
    <property type="component" value="Chromosome"/>
</dbReference>
<dbReference type="GO" id="GO:0005829">
    <property type="term" value="C:cytosol"/>
    <property type="evidence" value="ECO:0007669"/>
    <property type="project" value="TreeGrafter"/>
</dbReference>
<dbReference type="GO" id="GO:0005960">
    <property type="term" value="C:glycine cleavage complex"/>
    <property type="evidence" value="ECO:0007669"/>
    <property type="project" value="InterPro"/>
</dbReference>
<dbReference type="GO" id="GO:0019464">
    <property type="term" value="P:glycine decarboxylation via glycine cleavage system"/>
    <property type="evidence" value="ECO:0007669"/>
    <property type="project" value="UniProtKB-UniRule"/>
</dbReference>
<dbReference type="CDD" id="cd06848">
    <property type="entry name" value="GCS_H"/>
    <property type="match status" value="1"/>
</dbReference>
<dbReference type="Gene3D" id="2.40.50.100">
    <property type="match status" value="1"/>
</dbReference>
<dbReference type="HAMAP" id="MF_00272">
    <property type="entry name" value="GcvH"/>
    <property type="match status" value="1"/>
</dbReference>
<dbReference type="InterPro" id="IPR003016">
    <property type="entry name" value="2-oxoA_DH_lipoyl-BS"/>
</dbReference>
<dbReference type="InterPro" id="IPR000089">
    <property type="entry name" value="Biotin_lipoyl"/>
</dbReference>
<dbReference type="InterPro" id="IPR002930">
    <property type="entry name" value="GCV_H"/>
</dbReference>
<dbReference type="InterPro" id="IPR033753">
    <property type="entry name" value="GCV_H/Fam206"/>
</dbReference>
<dbReference type="InterPro" id="IPR017453">
    <property type="entry name" value="GCV_H_sub"/>
</dbReference>
<dbReference type="InterPro" id="IPR011053">
    <property type="entry name" value="Single_hybrid_motif"/>
</dbReference>
<dbReference type="NCBIfam" id="TIGR00527">
    <property type="entry name" value="gcvH"/>
    <property type="match status" value="1"/>
</dbReference>
<dbReference type="NCBIfam" id="NF002270">
    <property type="entry name" value="PRK01202.1"/>
    <property type="match status" value="1"/>
</dbReference>
<dbReference type="PANTHER" id="PTHR11715">
    <property type="entry name" value="GLYCINE CLEAVAGE SYSTEM H PROTEIN"/>
    <property type="match status" value="1"/>
</dbReference>
<dbReference type="PANTHER" id="PTHR11715:SF3">
    <property type="entry name" value="GLYCINE CLEAVAGE SYSTEM H PROTEIN-RELATED"/>
    <property type="match status" value="1"/>
</dbReference>
<dbReference type="Pfam" id="PF01597">
    <property type="entry name" value="GCV_H"/>
    <property type="match status" value="1"/>
</dbReference>
<dbReference type="SUPFAM" id="SSF51230">
    <property type="entry name" value="Single hybrid motif"/>
    <property type="match status" value="1"/>
</dbReference>
<dbReference type="PROSITE" id="PS50968">
    <property type="entry name" value="BIOTINYL_LIPOYL"/>
    <property type="match status" value="1"/>
</dbReference>
<dbReference type="PROSITE" id="PS00189">
    <property type="entry name" value="LIPOYL"/>
    <property type="match status" value="1"/>
</dbReference>
<proteinExistence type="inferred from homology"/>
<gene>
    <name evidence="1" type="primary">gcvH</name>
    <name type="ordered locus">BPUM_2938</name>
</gene>
<evidence type="ECO:0000255" key="1">
    <source>
        <dbReference type="HAMAP-Rule" id="MF_00272"/>
    </source>
</evidence>
<evidence type="ECO:0000255" key="2">
    <source>
        <dbReference type="PROSITE-ProRule" id="PRU01066"/>
    </source>
</evidence>
<feature type="chain" id="PRO_1000059177" description="Glycine cleavage system H protein">
    <location>
        <begin position="1"/>
        <end position="127"/>
    </location>
</feature>
<feature type="domain" description="Lipoyl-binding" evidence="2">
    <location>
        <begin position="22"/>
        <end position="104"/>
    </location>
</feature>
<feature type="modified residue" description="N6-lipoyllysine" evidence="1">
    <location>
        <position position="63"/>
    </location>
</feature>
<name>GCSH_BACP2</name>
<keyword id="KW-0450">Lipoyl</keyword>
<comment type="function">
    <text evidence="1">The glycine cleavage system catalyzes the degradation of glycine. The H protein shuttles the methylamine group of glycine from the P protein to the T protein.</text>
</comment>
<comment type="function">
    <text evidence="1">Is also involved in protein lipoylation via its role as an octanoyl/lipoyl carrier protein intermediate.</text>
</comment>
<comment type="cofactor">
    <cofactor evidence="1">
        <name>(R)-lipoate</name>
        <dbReference type="ChEBI" id="CHEBI:83088"/>
    </cofactor>
    <text evidence="1">Binds 1 lipoyl cofactor covalently.</text>
</comment>
<comment type="subunit">
    <text evidence="1">The glycine cleavage system is composed of four proteins: P, T, L and H.</text>
</comment>
<comment type="similarity">
    <text evidence="1">Belongs to the GcvH family.</text>
</comment>